<name>RUVC_CHLT3</name>
<evidence type="ECO:0000255" key="1">
    <source>
        <dbReference type="HAMAP-Rule" id="MF_00034"/>
    </source>
</evidence>
<proteinExistence type="inferred from homology"/>
<reference key="1">
    <citation type="submission" date="2008-06" db="EMBL/GenBank/DDBJ databases">
        <title>Complete sequence of Chloroherpeton thalassium ATCC 35110.</title>
        <authorList>
            <consortium name="US DOE Joint Genome Institute"/>
            <person name="Lucas S."/>
            <person name="Copeland A."/>
            <person name="Lapidus A."/>
            <person name="Glavina del Rio T."/>
            <person name="Dalin E."/>
            <person name="Tice H."/>
            <person name="Bruce D."/>
            <person name="Goodwin L."/>
            <person name="Pitluck S."/>
            <person name="Schmutz J."/>
            <person name="Larimer F."/>
            <person name="Land M."/>
            <person name="Hauser L."/>
            <person name="Kyrpides N."/>
            <person name="Mikhailova N."/>
            <person name="Liu Z."/>
            <person name="Li T."/>
            <person name="Zhao F."/>
            <person name="Overmann J."/>
            <person name="Bryant D.A."/>
            <person name="Richardson P."/>
        </authorList>
    </citation>
    <scope>NUCLEOTIDE SEQUENCE [LARGE SCALE GENOMIC DNA]</scope>
    <source>
        <strain>ATCC 35110 / GB-78</strain>
    </source>
</reference>
<dbReference type="EC" id="3.1.21.10" evidence="1"/>
<dbReference type="EMBL" id="CP001100">
    <property type="protein sequence ID" value="ACF14244.1"/>
    <property type="molecule type" value="Genomic_DNA"/>
</dbReference>
<dbReference type="RefSeq" id="WP_012500328.1">
    <property type="nucleotide sequence ID" value="NC_011026.1"/>
</dbReference>
<dbReference type="SMR" id="B3QTP6"/>
<dbReference type="STRING" id="517418.Ctha_1787"/>
<dbReference type="KEGG" id="cts:Ctha_1787"/>
<dbReference type="eggNOG" id="COG0817">
    <property type="taxonomic scope" value="Bacteria"/>
</dbReference>
<dbReference type="HOGENOM" id="CLU_091257_3_1_10"/>
<dbReference type="OrthoDB" id="9805499at2"/>
<dbReference type="Proteomes" id="UP000001208">
    <property type="component" value="Chromosome"/>
</dbReference>
<dbReference type="GO" id="GO:0005737">
    <property type="term" value="C:cytoplasm"/>
    <property type="evidence" value="ECO:0007669"/>
    <property type="project" value="UniProtKB-SubCell"/>
</dbReference>
<dbReference type="GO" id="GO:0048476">
    <property type="term" value="C:Holliday junction resolvase complex"/>
    <property type="evidence" value="ECO:0007669"/>
    <property type="project" value="UniProtKB-UniRule"/>
</dbReference>
<dbReference type="GO" id="GO:0008821">
    <property type="term" value="F:crossover junction DNA endonuclease activity"/>
    <property type="evidence" value="ECO:0007669"/>
    <property type="project" value="UniProtKB-UniRule"/>
</dbReference>
<dbReference type="GO" id="GO:0003677">
    <property type="term" value="F:DNA binding"/>
    <property type="evidence" value="ECO:0007669"/>
    <property type="project" value="UniProtKB-KW"/>
</dbReference>
<dbReference type="GO" id="GO:0000287">
    <property type="term" value="F:magnesium ion binding"/>
    <property type="evidence" value="ECO:0007669"/>
    <property type="project" value="UniProtKB-UniRule"/>
</dbReference>
<dbReference type="GO" id="GO:0006310">
    <property type="term" value="P:DNA recombination"/>
    <property type="evidence" value="ECO:0007669"/>
    <property type="project" value="UniProtKB-UniRule"/>
</dbReference>
<dbReference type="GO" id="GO:0006281">
    <property type="term" value="P:DNA repair"/>
    <property type="evidence" value="ECO:0007669"/>
    <property type="project" value="UniProtKB-UniRule"/>
</dbReference>
<dbReference type="CDD" id="cd16962">
    <property type="entry name" value="RuvC"/>
    <property type="match status" value="1"/>
</dbReference>
<dbReference type="FunFam" id="3.30.420.10:FF:000002">
    <property type="entry name" value="Crossover junction endodeoxyribonuclease RuvC"/>
    <property type="match status" value="1"/>
</dbReference>
<dbReference type="Gene3D" id="3.30.420.10">
    <property type="entry name" value="Ribonuclease H-like superfamily/Ribonuclease H"/>
    <property type="match status" value="1"/>
</dbReference>
<dbReference type="HAMAP" id="MF_00034">
    <property type="entry name" value="RuvC"/>
    <property type="match status" value="1"/>
</dbReference>
<dbReference type="InterPro" id="IPR012337">
    <property type="entry name" value="RNaseH-like_sf"/>
</dbReference>
<dbReference type="InterPro" id="IPR036397">
    <property type="entry name" value="RNaseH_sf"/>
</dbReference>
<dbReference type="InterPro" id="IPR020563">
    <property type="entry name" value="X-over_junc_endoDNase_Mg_BS"/>
</dbReference>
<dbReference type="InterPro" id="IPR002176">
    <property type="entry name" value="X-over_junc_endoDNase_RuvC"/>
</dbReference>
<dbReference type="NCBIfam" id="TIGR00228">
    <property type="entry name" value="ruvC"/>
    <property type="match status" value="1"/>
</dbReference>
<dbReference type="PANTHER" id="PTHR30194">
    <property type="entry name" value="CROSSOVER JUNCTION ENDODEOXYRIBONUCLEASE RUVC"/>
    <property type="match status" value="1"/>
</dbReference>
<dbReference type="PANTHER" id="PTHR30194:SF3">
    <property type="entry name" value="CROSSOVER JUNCTION ENDODEOXYRIBONUCLEASE RUVC"/>
    <property type="match status" value="1"/>
</dbReference>
<dbReference type="Pfam" id="PF02075">
    <property type="entry name" value="RuvC"/>
    <property type="match status" value="1"/>
</dbReference>
<dbReference type="PRINTS" id="PR00696">
    <property type="entry name" value="RSOLVASERUVC"/>
</dbReference>
<dbReference type="SUPFAM" id="SSF53098">
    <property type="entry name" value="Ribonuclease H-like"/>
    <property type="match status" value="1"/>
</dbReference>
<dbReference type="PROSITE" id="PS01321">
    <property type="entry name" value="RUVC"/>
    <property type="match status" value="1"/>
</dbReference>
<sequence>MITLGVDPGSIVTGYGVIGKSEAGFRVFDYSAIRPGGKCDFPQRIKYIYDTLEKVICAYKPTQLSLETAFYGKNAQSALKLGQVRGAIIILAMNYNLKFVEYSPREVKKSVAGTGNASKEQVAYMVKKMLSIDDEKMALDTSDALAIALCGHFKSASMAASEFKKQSRKATSWGEYILQNPQVVVK</sequence>
<gene>
    <name evidence="1" type="primary">ruvC</name>
    <name type="ordered locus">Ctha_1787</name>
</gene>
<organism>
    <name type="scientific">Chloroherpeton thalassium (strain ATCC 35110 / GB-78)</name>
    <dbReference type="NCBI Taxonomy" id="517418"/>
    <lineage>
        <taxon>Bacteria</taxon>
        <taxon>Pseudomonadati</taxon>
        <taxon>Chlorobiota</taxon>
        <taxon>Chlorobiia</taxon>
        <taxon>Chlorobiales</taxon>
        <taxon>Chloroherpetonaceae</taxon>
        <taxon>Chloroherpeton</taxon>
    </lineage>
</organism>
<keyword id="KW-0963">Cytoplasm</keyword>
<keyword id="KW-0227">DNA damage</keyword>
<keyword id="KW-0233">DNA recombination</keyword>
<keyword id="KW-0234">DNA repair</keyword>
<keyword id="KW-0238">DNA-binding</keyword>
<keyword id="KW-0255">Endonuclease</keyword>
<keyword id="KW-0378">Hydrolase</keyword>
<keyword id="KW-0460">Magnesium</keyword>
<keyword id="KW-0479">Metal-binding</keyword>
<keyword id="KW-0540">Nuclease</keyword>
<keyword id="KW-1185">Reference proteome</keyword>
<comment type="function">
    <text evidence="1">The RuvA-RuvB-RuvC complex processes Holliday junction (HJ) DNA during genetic recombination and DNA repair. Endonuclease that resolves HJ intermediates. Cleaves cruciform DNA by making single-stranded nicks across the HJ at symmetrical positions within the homologous arms, yielding a 5'-phosphate and a 3'-hydroxyl group; requires a central core of homology in the junction. The consensus cleavage sequence is 5'-(A/T)TT(C/G)-3'. Cleavage occurs on the 3'-side of the TT dinucleotide at the point of strand exchange. HJ branch migration catalyzed by RuvA-RuvB allows RuvC to scan DNA until it finds its consensus sequence, where it cleaves and resolves the cruciform DNA.</text>
</comment>
<comment type="catalytic activity">
    <reaction evidence="1">
        <text>Endonucleolytic cleavage at a junction such as a reciprocal single-stranded crossover between two homologous DNA duplexes (Holliday junction).</text>
        <dbReference type="EC" id="3.1.21.10"/>
    </reaction>
</comment>
<comment type="cofactor">
    <cofactor evidence="1">
        <name>Mg(2+)</name>
        <dbReference type="ChEBI" id="CHEBI:18420"/>
    </cofactor>
    <text evidence="1">Binds 2 Mg(2+) ion per subunit.</text>
</comment>
<comment type="subunit">
    <text evidence="1">Homodimer which binds Holliday junction (HJ) DNA. The HJ becomes 2-fold symmetrical on binding to RuvC with unstacked arms; it has a different conformation from HJ DNA in complex with RuvA. In the full resolvosome a probable DNA-RuvA(4)-RuvB(12)-RuvC(2) complex forms which resolves the HJ.</text>
</comment>
<comment type="subcellular location">
    <subcellularLocation>
        <location evidence="1">Cytoplasm</location>
    </subcellularLocation>
</comment>
<comment type="similarity">
    <text evidence="1">Belongs to the RuvC family.</text>
</comment>
<feature type="chain" id="PRO_1000090515" description="Crossover junction endodeoxyribonuclease RuvC">
    <location>
        <begin position="1"/>
        <end position="186"/>
    </location>
</feature>
<feature type="active site" evidence="1">
    <location>
        <position position="7"/>
    </location>
</feature>
<feature type="active site" evidence="1">
    <location>
        <position position="67"/>
    </location>
</feature>
<feature type="active site" evidence="1">
    <location>
        <position position="140"/>
    </location>
</feature>
<feature type="binding site" evidence="1">
    <location>
        <position position="7"/>
    </location>
    <ligand>
        <name>Mg(2+)</name>
        <dbReference type="ChEBI" id="CHEBI:18420"/>
        <label>1</label>
    </ligand>
</feature>
<feature type="binding site" evidence="1">
    <location>
        <position position="67"/>
    </location>
    <ligand>
        <name>Mg(2+)</name>
        <dbReference type="ChEBI" id="CHEBI:18420"/>
        <label>2</label>
    </ligand>
</feature>
<feature type="binding site" evidence="1">
    <location>
        <position position="140"/>
    </location>
    <ligand>
        <name>Mg(2+)</name>
        <dbReference type="ChEBI" id="CHEBI:18420"/>
        <label>1</label>
    </ligand>
</feature>
<protein>
    <recommendedName>
        <fullName evidence="1">Crossover junction endodeoxyribonuclease RuvC</fullName>
        <ecNumber evidence="1">3.1.21.10</ecNumber>
    </recommendedName>
    <alternativeName>
        <fullName evidence="1">Holliday junction nuclease RuvC</fullName>
    </alternativeName>
    <alternativeName>
        <fullName evidence="1">Holliday junction resolvase RuvC</fullName>
    </alternativeName>
</protein>
<accession>B3QTP6</accession>